<feature type="chain" id="PRO_0000320400" description="Ribosome biogenesis protein NSA1">
    <location>
        <begin position="1"/>
        <end position="447"/>
    </location>
</feature>
<feature type="region of interest" description="Disordered" evidence="2">
    <location>
        <begin position="83"/>
        <end position="114"/>
    </location>
</feature>
<feature type="region of interest" description="Disordered" evidence="2">
    <location>
        <begin position="414"/>
        <end position="447"/>
    </location>
</feature>
<feature type="compositionally biased region" description="Basic and acidic residues" evidence="2">
    <location>
        <begin position="84"/>
        <end position="107"/>
    </location>
</feature>
<evidence type="ECO:0000250" key="1"/>
<evidence type="ECO:0000256" key="2">
    <source>
        <dbReference type="SAM" id="MobiDB-lite"/>
    </source>
</evidence>
<evidence type="ECO:0000305" key="3"/>
<name>NSA1_LODEL</name>
<gene>
    <name type="primary">NSA1</name>
    <name type="ORF">LELG_01928</name>
</gene>
<dbReference type="EMBL" id="CH981525">
    <property type="protein sequence ID" value="EDK43749.1"/>
    <property type="molecule type" value="Genomic_DNA"/>
</dbReference>
<dbReference type="RefSeq" id="XP_001527099.1">
    <property type="nucleotide sequence ID" value="XM_001527049.1"/>
</dbReference>
<dbReference type="SMR" id="A5DX41"/>
<dbReference type="FunCoup" id="A5DX41">
    <property type="interactions" value="615"/>
</dbReference>
<dbReference type="STRING" id="379508.A5DX41"/>
<dbReference type="GeneID" id="5233760"/>
<dbReference type="KEGG" id="lel:PVL30_001899"/>
<dbReference type="VEuPathDB" id="FungiDB:LELG_01928"/>
<dbReference type="eggNOG" id="KOG3881">
    <property type="taxonomic scope" value="Eukaryota"/>
</dbReference>
<dbReference type="HOGENOM" id="CLU_033769_4_0_1"/>
<dbReference type="InParanoid" id="A5DX41"/>
<dbReference type="OMA" id="IWEAKNV"/>
<dbReference type="OrthoDB" id="18388at2759"/>
<dbReference type="Proteomes" id="UP000001996">
    <property type="component" value="Unassembled WGS sequence"/>
</dbReference>
<dbReference type="GO" id="GO:0005730">
    <property type="term" value="C:nucleolus"/>
    <property type="evidence" value="ECO:0007669"/>
    <property type="project" value="UniProtKB-SubCell"/>
</dbReference>
<dbReference type="GO" id="GO:0030687">
    <property type="term" value="C:preribosome, large subunit precursor"/>
    <property type="evidence" value="ECO:0007669"/>
    <property type="project" value="TreeGrafter"/>
</dbReference>
<dbReference type="GO" id="GO:0042273">
    <property type="term" value="P:ribosomal large subunit biogenesis"/>
    <property type="evidence" value="ECO:0007669"/>
    <property type="project" value="InterPro"/>
</dbReference>
<dbReference type="GO" id="GO:0006364">
    <property type="term" value="P:rRNA processing"/>
    <property type="evidence" value="ECO:0007669"/>
    <property type="project" value="UniProtKB-KW"/>
</dbReference>
<dbReference type="CDD" id="cd22858">
    <property type="entry name" value="Nsa1"/>
    <property type="match status" value="1"/>
</dbReference>
<dbReference type="Gene3D" id="2.130.10.10">
    <property type="entry name" value="YVTN repeat-like/Quinoprotein amine dehydrogenase"/>
    <property type="match status" value="1"/>
</dbReference>
<dbReference type="InterPro" id="IPR015943">
    <property type="entry name" value="WD40/YVTN_repeat-like_dom_sf"/>
</dbReference>
<dbReference type="InterPro" id="IPR036322">
    <property type="entry name" value="WD40_repeat_dom_sf"/>
</dbReference>
<dbReference type="InterPro" id="IPR037379">
    <property type="entry name" value="WDR74/Nsa1"/>
</dbReference>
<dbReference type="PANTHER" id="PTHR16038">
    <property type="entry name" value="NOP SEVEN ASSOCIATED PROTEIN 1"/>
    <property type="match status" value="1"/>
</dbReference>
<dbReference type="PANTHER" id="PTHR16038:SF4">
    <property type="entry name" value="WD REPEAT-CONTAINING PROTEIN 74"/>
    <property type="match status" value="1"/>
</dbReference>
<dbReference type="SUPFAM" id="SSF50978">
    <property type="entry name" value="WD40 repeat-like"/>
    <property type="match status" value="1"/>
</dbReference>
<sequence>MKVLTTCDDTGAAKLCSFKRGTDTSKKDATQPDLIENCMNLPKSNYKTRIIHLINYNYQYFIASRLGGTLSIYDYEENDVAMKPQEKQEGNGSKSDKEQKSSLKVESESTNSKENIEEVAGYVEERFKFLHEFKLPVSMNDRPIALQKCEKLDSVLVAYESGKVYLVYVGDFSFEPLLLHLPGCTHLNAFAIHPEQENVVAFGGKETDLQIAELYNSSVNSKIFKKDYKSAFVPKILFKAKNVSNDHLNLRVPIWITNILFFTNNVTNGQYKLITSTRYGQLRIYDTKHGRKPVKDYPVSTTPILTLLFGNDKETEVVLTDTQNLMAKYSLDIIDDKAFKTNSASAGDIIKPVPKLLGKYTGGNTGATLAQQVYEGIVAFAGLDRYLRVFDVESRQILAKVYLGVEVSSLIIIDDEDEENEEEQKRKRDEEEEDNEMWSQLDKKQKV</sequence>
<keyword id="KW-0539">Nucleus</keyword>
<keyword id="KW-1185">Reference proteome</keyword>
<keyword id="KW-0690">Ribosome biogenesis</keyword>
<keyword id="KW-0698">rRNA processing</keyword>
<comment type="function">
    <text evidence="1">Involved in the biogenesis of the 60S ribosomal subunit.</text>
</comment>
<comment type="subunit">
    <text evidence="1">Component of the pre-66S ribosomal particle.</text>
</comment>
<comment type="subcellular location">
    <subcellularLocation>
        <location evidence="1">Nucleus</location>
        <location evidence="1">Nucleolus</location>
    </subcellularLocation>
</comment>
<comment type="similarity">
    <text evidence="3">Belongs to the NSA1 family.</text>
</comment>
<organism>
    <name type="scientific">Lodderomyces elongisporus (strain ATCC 11503 / CBS 2605 / JCM 1781 / NBRC 1676 / NRRL YB-4239)</name>
    <name type="common">Yeast</name>
    <name type="synonym">Saccharomyces elongisporus</name>
    <dbReference type="NCBI Taxonomy" id="379508"/>
    <lineage>
        <taxon>Eukaryota</taxon>
        <taxon>Fungi</taxon>
        <taxon>Dikarya</taxon>
        <taxon>Ascomycota</taxon>
        <taxon>Saccharomycotina</taxon>
        <taxon>Pichiomycetes</taxon>
        <taxon>Debaryomycetaceae</taxon>
        <taxon>Candida/Lodderomyces clade</taxon>
        <taxon>Lodderomyces</taxon>
    </lineage>
</organism>
<accession>A5DX41</accession>
<protein>
    <recommendedName>
        <fullName>Ribosome biogenesis protein NSA1</fullName>
    </recommendedName>
</protein>
<reference key="1">
    <citation type="journal article" date="2009" name="Nature">
        <title>Evolution of pathogenicity and sexual reproduction in eight Candida genomes.</title>
        <authorList>
            <person name="Butler G."/>
            <person name="Rasmussen M.D."/>
            <person name="Lin M.F."/>
            <person name="Santos M.A.S."/>
            <person name="Sakthikumar S."/>
            <person name="Munro C.A."/>
            <person name="Rheinbay E."/>
            <person name="Grabherr M."/>
            <person name="Forche A."/>
            <person name="Reedy J.L."/>
            <person name="Agrafioti I."/>
            <person name="Arnaud M.B."/>
            <person name="Bates S."/>
            <person name="Brown A.J.P."/>
            <person name="Brunke S."/>
            <person name="Costanzo M.C."/>
            <person name="Fitzpatrick D.A."/>
            <person name="de Groot P.W.J."/>
            <person name="Harris D."/>
            <person name="Hoyer L.L."/>
            <person name="Hube B."/>
            <person name="Klis F.M."/>
            <person name="Kodira C."/>
            <person name="Lennard N."/>
            <person name="Logue M.E."/>
            <person name="Martin R."/>
            <person name="Neiman A.M."/>
            <person name="Nikolaou E."/>
            <person name="Quail M.A."/>
            <person name="Quinn J."/>
            <person name="Santos M.C."/>
            <person name="Schmitzberger F.F."/>
            <person name="Sherlock G."/>
            <person name="Shah P."/>
            <person name="Silverstein K.A.T."/>
            <person name="Skrzypek M.S."/>
            <person name="Soll D."/>
            <person name="Staggs R."/>
            <person name="Stansfield I."/>
            <person name="Stumpf M.P.H."/>
            <person name="Sudbery P.E."/>
            <person name="Srikantha T."/>
            <person name="Zeng Q."/>
            <person name="Berman J."/>
            <person name="Berriman M."/>
            <person name="Heitman J."/>
            <person name="Gow N.A.R."/>
            <person name="Lorenz M.C."/>
            <person name="Birren B.W."/>
            <person name="Kellis M."/>
            <person name="Cuomo C.A."/>
        </authorList>
    </citation>
    <scope>NUCLEOTIDE SEQUENCE [LARGE SCALE GENOMIC DNA]</scope>
    <source>
        <strain>ATCC 11503 / BCRC 21390 / CBS 2605 / JCM 1781 / NBRC 1676 / NRRL YB-4239</strain>
    </source>
</reference>
<proteinExistence type="inferred from homology"/>